<feature type="chain" id="PRO_0000194552" description="HTH-type transcriptional activator RhaR">
    <location>
        <begin position="1"/>
        <end position="282"/>
    </location>
</feature>
<feature type="domain" description="HTH araC/xylS-type" evidence="1">
    <location>
        <begin position="179"/>
        <end position="277"/>
    </location>
</feature>
<feature type="DNA-binding region" description="H-T-H motif" evidence="1">
    <location>
        <begin position="196"/>
        <end position="217"/>
    </location>
</feature>
<feature type="DNA-binding region" description="H-T-H motif" evidence="1">
    <location>
        <begin position="244"/>
        <end position="267"/>
    </location>
</feature>
<feature type="site" description="Interaction with sigma-70" evidence="1">
    <location>
        <position position="246"/>
    </location>
</feature>
<accession>Q8FBD7</accession>
<name>RHAR_ECOL6</name>
<sequence length="282" mass="32304">MAHQLKLLKDDFFASDQQAVAVADRYPQDVFAEHTHDFCELVIVWRGNGLHVLNDRPYRITRGDLFYIHADDKHSYASVNDLVLQNIIYCPERLKLNLDWQGAIPGFSASAGQPHWRLGSVGMAQARQVIGQLEHESSQHVSFANEMAELLFGQLVMLLNRHRYTSDSLPPTSSETLLDKLITRLAASLKSPFALDKFCDEASCSERVLRQQFRQQTGMTINQYLRQVRVCHAQYLLQHSRLLISDISTECGFEDSNYFSVVFTRETGMTPSQWRHLNSQKD</sequence>
<protein>
    <recommendedName>
        <fullName evidence="1">HTH-type transcriptional activator RhaR</fullName>
    </recommendedName>
    <alternativeName>
        <fullName evidence="1">L-rhamnose operon transcriptional activator RhaR</fullName>
    </alternativeName>
</protein>
<comment type="function">
    <text evidence="1">Activates expression of the rhaSR operon in response to L-rhamnose.</text>
</comment>
<comment type="subunit">
    <text evidence="1">Binds DNA as a dimer.</text>
</comment>
<comment type="subcellular location">
    <subcellularLocation>
        <location evidence="1">Cytoplasm</location>
    </subcellularLocation>
</comment>
<comment type="sequence caution" evidence="2">
    <conflict type="erroneous initiation">
        <sequence resource="EMBL-CDS" id="AAN83284"/>
    </conflict>
</comment>
<organism>
    <name type="scientific">Escherichia coli O6:H1 (strain CFT073 / ATCC 700928 / UPEC)</name>
    <dbReference type="NCBI Taxonomy" id="199310"/>
    <lineage>
        <taxon>Bacteria</taxon>
        <taxon>Pseudomonadati</taxon>
        <taxon>Pseudomonadota</taxon>
        <taxon>Gammaproteobacteria</taxon>
        <taxon>Enterobacterales</taxon>
        <taxon>Enterobacteriaceae</taxon>
        <taxon>Escherichia</taxon>
    </lineage>
</organism>
<keyword id="KW-0010">Activator</keyword>
<keyword id="KW-0963">Cytoplasm</keyword>
<keyword id="KW-0238">DNA-binding</keyword>
<keyword id="KW-1185">Reference proteome</keyword>
<keyword id="KW-0677">Repeat</keyword>
<keyword id="KW-0684">Rhamnose metabolism</keyword>
<keyword id="KW-0804">Transcription</keyword>
<keyword id="KW-0805">Transcription regulation</keyword>
<evidence type="ECO:0000255" key="1">
    <source>
        <dbReference type="HAMAP-Rule" id="MF_01533"/>
    </source>
</evidence>
<evidence type="ECO:0000305" key="2"/>
<dbReference type="EMBL" id="AE014075">
    <property type="protein sequence ID" value="AAN83284.1"/>
    <property type="status" value="ALT_INIT"/>
    <property type="molecule type" value="Genomic_DNA"/>
</dbReference>
<dbReference type="RefSeq" id="WP_001298410.1">
    <property type="nucleotide sequence ID" value="NZ_CP051263.1"/>
</dbReference>
<dbReference type="SMR" id="Q8FBD7"/>
<dbReference type="STRING" id="199310.c4856"/>
<dbReference type="GeneID" id="93778032"/>
<dbReference type="KEGG" id="ecc:c4856"/>
<dbReference type="eggNOG" id="COG1917">
    <property type="taxonomic scope" value="Bacteria"/>
</dbReference>
<dbReference type="eggNOG" id="COG4977">
    <property type="taxonomic scope" value="Bacteria"/>
</dbReference>
<dbReference type="HOGENOM" id="CLU_000445_88_5_6"/>
<dbReference type="Proteomes" id="UP000001410">
    <property type="component" value="Chromosome"/>
</dbReference>
<dbReference type="GO" id="GO:0005737">
    <property type="term" value="C:cytoplasm"/>
    <property type="evidence" value="ECO:0007669"/>
    <property type="project" value="UniProtKB-SubCell"/>
</dbReference>
<dbReference type="GO" id="GO:0003700">
    <property type="term" value="F:DNA-binding transcription factor activity"/>
    <property type="evidence" value="ECO:0007669"/>
    <property type="project" value="UniProtKB-UniRule"/>
</dbReference>
<dbReference type="GO" id="GO:0043565">
    <property type="term" value="F:sequence-specific DNA binding"/>
    <property type="evidence" value="ECO:0007669"/>
    <property type="project" value="InterPro"/>
</dbReference>
<dbReference type="GO" id="GO:0045893">
    <property type="term" value="P:positive regulation of DNA-templated transcription"/>
    <property type="evidence" value="ECO:0007669"/>
    <property type="project" value="UniProtKB-UniRule"/>
</dbReference>
<dbReference type="GO" id="GO:0019299">
    <property type="term" value="P:rhamnose metabolic process"/>
    <property type="evidence" value="ECO:0007669"/>
    <property type="project" value="UniProtKB-UniRule"/>
</dbReference>
<dbReference type="CDD" id="cd06977">
    <property type="entry name" value="cupin_RhaR_RhaS-like_N"/>
    <property type="match status" value="1"/>
</dbReference>
<dbReference type="Gene3D" id="1.10.10.60">
    <property type="entry name" value="Homeodomain-like"/>
    <property type="match status" value="2"/>
</dbReference>
<dbReference type="Gene3D" id="2.60.120.10">
    <property type="entry name" value="Jelly Rolls"/>
    <property type="match status" value="1"/>
</dbReference>
<dbReference type="HAMAP" id="MF_01533">
    <property type="entry name" value="HTH_type_RhaR"/>
    <property type="match status" value="1"/>
</dbReference>
<dbReference type="InterPro" id="IPR003313">
    <property type="entry name" value="AraC-bd"/>
</dbReference>
<dbReference type="InterPro" id="IPR009057">
    <property type="entry name" value="Homeodomain-like_sf"/>
</dbReference>
<dbReference type="InterPro" id="IPR018060">
    <property type="entry name" value="HTH_AraC"/>
</dbReference>
<dbReference type="InterPro" id="IPR018062">
    <property type="entry name" value="HTH_AraC-typ_CS"/>
</dbReference>
<dbReference type="InterPro" id="IPR047220">
    <property type="entry name" value="RhaR_RhaS-like_N"/>
</dbReference>
<dbReference type="InterPro" id="IPR014710">
    <property type="entry name" value="RmlC-like_jellyroll"/>
</dbReference>
<dbReference type="InterPro" id="IPR011051">
    <property type="entry name" value="RmlC_Cupin_sf"/>
</dbReference>
<dbReference type="InterPro" id="IPR023699">
    <property type="entry name" value="Tscrpt_act_RhaR"/>
</dbReference>
<dbReference type="InterPro" id="IPR020449">
    <property type="entry name" value="Tscrpt_reg_AraC-type_HTH"/>
</dbReference>
<dbReference type="NCBIfam" id="NF010025">
    <property type="entry name" value="PRK13500.1"/>
    <property type="match status" value="1"/>
</dbReference>
<dbReference type="NCBIfam" id="NF010026">
    <property type="entry name" value="PRK13501.1"/>
    <property type="match status" value="1"/>
</dbReference>
<dbReference type="NCBIfam" id="NF010027">
    <property type="entry name" value="PRK13502.1"/>
    <property type="match status" value="1"/>
</dbReference>
<dbReference type="PANTHER" id="PTHR43280">
    <property type="entry name" value="ARAC-FAMILY TRANSCRIPTIONAL REGULATOR"/>
    <property type="match status" value="1"/>
</dbReference>
<dbReference type="PANTHER" id="PTHR43280:SF13">
    <property type="entry name" value="HTH-TYPE TRANSCRIPTIONAL ACTIVATOR RHAR"/>
    <property type="match status" value="1"/>
</dbReference>
<dbReference type="Pfam" id="PF02311">
    <property type="entry name" value="AraC_binding"/>
    <property type="match status" value="1"/>
</dbReference>
<dbReference type="Pfam" id="PF12833">
    <property type="entry name" value="HTH_18"/>
    <property type="match status" value="1"/>
</dbReference>
<dbReference type="PRINTS" id="PR00032">
    <property type="entry name" value="HTHARAC"/>
</dbReference>
<dbReference type="SMART" id="SM00342">
    <property type="entry name" value="HTH_ARAC"/>
    <property type="match status" value="1"/>
</dbReference>
<dbReference type="SUPFAM" id="SSF46689">
    <property type="entry name" value="Homeodomain-like"/>
    <property type="match status" value="2"/>
</dbReference>
<dbReference type="SUPFAM" id="SSF51182">
    <property type="entry name" value="RmlC-like cupins"/>
    <property type="match status" value="1"/>
</dbReference>
<dbReference type="PROSITE" id="PS00041">
    <property type="entry name" value="HTH_ARAC_FAMILY_1"/>
    <property type="match status" value="1"/>
</dbReference>
<dbReference type="PROSITE" id="PS01124">
    <property type="entry name" value="HTH_ARAC_FAMILY_2"/>
    <property type="match status" value="1"/>
</dbReference>
<gene>
    <name evidence="1" type="primary">rhaR</name>
    <name type="ordered locus">c4856</name>
</gene>
<reference key="1">
    <citation type="journal article" date="2002" name="Proc. Natl. Acad. Sci. U.S.A.">
        <title>Extensive mosaic structure revealed by the complete genome sequence of uropathogenic Escherichia coli.</title>
        <authorList>
            <person name="Welch R.A."/>
            <person name="Burland V."/>
            <person name="Plunkett G. III"/>
            <person name="Redford P."/>
            <person name="Roesch P."/>
            <person name="Rasko D."/>
            <person name="Buckles E.L."/>
            <person name="Liou S.-R."/>
            <person name="Boutin A."/>
            <person name="Hackett J."/>
            <person name="Stroud D."/>
            <person name="Mayhew G.F."/>
            <person name="Rose D.J."/>
            <person name="Zhou S."/>
            <person name="Schwartz D.C."/>
            <person name="Perna N.T."/>
            <person name="Mobley H.L.T."/>
            <person name="Donnenberg M.S."/>
            <person name="Blattner F.R."/>
        </authorList>
    </citation>
    <scope>NUCLEOTIDE SEQUENCE [LARGE SCALE GENOMIC DNA]</scope>
    <source>
        <strain>CFT073 / ATCC 700928 / UPEC</strain>
    </source>
</reference>
<proteinExistence type="inferred from homology"/>